<proteinExistence type="evidence at transcript level"/>
<organism>
    <name type="scientific">Rattus norvegicus</name>
    <name type="common">Rat</name>
    <dbReference type="NCBI Taxonomy" id="10116"/>
    <lineage>
        <taxon>Eukaryota</taxon>
        <taxon>Metazoa</taxon>
        <taxon>Chordata</taxon>
        <taxon>Craniata</taxon>
        <taxon>Vertebrata</taxon>
        <taxon>Euteleostomi</taxon>
        <taxon>Mammalia</taxon>
        <taxon>Eutheria</taxon>
        <taxon>Euarchontoglires</taxon>
        <taxon>Glires</taxon>
        <taxon>Rodentia</taxon>
        <taxon>Myomorpha</taxon>
        <taxon>Muroidea</taxon>
        <taxon>Muridae</taxon>
        <taxon>Murinae</taxon>
        <taxon>Rattus</taxon>
    </lineage>
</organism>
<evidence type="ECO:0000250" key="1">
    <source>
        <dbReference type="UniProtKB" id="P11168"/>
    </source>
</evidence>
<evidence type="ECO:0000250" key="2">
    <source>
        <dbReference type="UniProtKB" id="P11169"/>
    </source>
</evidence>
<evidence type="ECO:0000250" key="3">
    <source>
        <dbReference type="UniProtKB" id="P14246"/>
    </source>
</evidence>
<evidence type="ECO:0000255" key="4"/>
<evidence type="ECO:0000269" key="5">
    <source>
    </source>
</evidence>
<evidence type="ECO:0000303" key="6">
    <source>
    </source>
</evidence>
<evidence type="ECO:0000303" key="7">
    <source>
    </source>
</evidence>
<evidence type="ECO:0000305" key="8"/>
<evidence type="ECO:0000312" key="9">
    <source>
        <dbReference type="RGD" id="3705"/>
    </source>
</evidence>
<sequence length="522" mass="57086">MSEDKITGTLAFTVFTAVLGSFQFGYDIGVINAPQEVIISHYRHVLGVPLDDRRATINYDINGTDTPLIVTPAHTTPDAWEEETEGSAHIVTMLWSLSVSSFAVGGMVASFFGGWLGDKLGRIKAMLAANSLSLTGALLMGCSKFGPAHALIIAGRSVSGLYCGLISGLVPMYIGEIAPTTLRGALGTLHQLALVTGILISQIAGLSFILGNQDYWHILLGLSAVPALLQCLLLLFCPESPRYLYLNLEEEVRAKKSLKRLRGTEDITKDINEMRKEKEEASTEQKVSVIQLFTDPNYRQPIVVALMLHLAQQFSGINGIFYYSTSIFQTAGISQPVYATIGVGAINMIFTAVSVLLVEKAGRRTLFLAGMIGMFFCAVFMSLGLVLLDKFTWMSYVSMTAIFLFVSFFEIGPGPIPWFMVAEFFSQGPRPTALALAAFSNWVCNFIIALCFQYIADFLGPYVFFLFAGVVLVFTLFTFFKVPETKGKSFDEIAAEFRKKSGSAPPRKATVQMEFLGSSETV</sequence>
<accession>P12336</accession>
<accession>Q6LE98</accession>
<dbReference type="EMBL" id="J03145">
    <property type="protein sequence ID" value="AAA41298.1"/>
    <property type="molecule type" value="mRNA"/>
</dbReference>
<dbReference type="EMBL" id="L28134">
    <property type="protein sequence ID" value="AAA99958.1"/>
    <property type="molecule type" value="Genomic_DNA"/>
</dbReference>
<dbReference type="PIR" id="A31556">
    <property type="entry name" value="A31556"/>
</dbReference>
<dbReference type="SMR" id="P12336"/>
<dbReference type="FunCoup" id="P12336">
    <property type="interactions" value="161"/>
</dbReference>
<dbReference type="STRING" id="10116.ENSRNOP00000015866"/>
<dbReference type="ChEMBL" id="CHEMBL4295714"/>
<dbReference type="GlyCosmos" id="P12336">
    <property type="glycosylation" value="1 site, No reported glycans"/>
</dbReference>
<dbReference type="GlyGen" id="P12336">
    <property type="glycosylation" value="1 site"/>
</dbReference>
<dbReference type="iPTMnet" id="P12336"/>
<dbReference type="PhosphoSitePlus" id="P12336"/>
<dbReference type="PaxDb" id="10116-ENSRNOP00000015866"/>
<dbReference type="UCSC" id="RGD:3705">
    <property type="organism name" value="rat"/>
</dbReference>
<dbReference type="AGR" id="RGD:3705"/>
<dbReference type="RGD" id="3705">
    <property type="gene designation" value="Slc2a2"/>
</dbReference>
<dbReference type="eggNOG" id="KOG0569">
    <property type="taxonomic scope" value="Eukaryota"/>
</dbReference>
<dbReference type="InParanoid" id="P12336"/>
<dbReference type="PhylomeDB" id="P12336"/>
<dbReference type="Reactome" id="R-RNO-189200">
    <property type="pathway name" value="Cellular hexose transport"/>
</dbReference>
<dbReference type="Reactome" id="R-RNO-422356">
    <property type="pathway name" value="Regulation of insulin secretion"/>
</dbReference>
<dbReference type="Reactome" id="R-RNO-8981373">
    <property type="pathway name" value="Intestinal hexose absorption"/>
</dbReference>
<dbReference type="PRO" id="PR:P12336"/>
<dbReference type="Proteomes" id="UP000002494">
    <property type="component" value="Unplaced"/>
</dbReference>
<dbReference type="GO" id="GO:0016324">
    <property type="term" value="C:apical plasma membrane"/>
    <property type="evidence" value="ECO:0000314"/>
    <property type="project" value="ARUK-UCL"/>
</dbReference>
<dbReference type="GO" id="GO:0016323">
    <property type="term" value="C:basolateral plasma membrane"/>
    <property type="evidence" value="ECO:0000314"/>
    <property type="project" value="RGD"/>
</dbReference>
<dbReference type="GO" id="GO:0005903">
    <property type="term" value="C:brush border"/>
    <property type="evidence" value="ECO:0000314"/>
    <property type="project" value="RGD"/>
</dbReference>
<dbReference type="GO" id="GO:0031526">
    <property type="term" value="C:brush border membrane"/>
    <property type="evidence" value="ECO:0000314"/>
    <property type="project" value="RGD"/>
</dbReference>
<dbReference type="GO" id="GO:0005911">
    <property type="term" value="C:cell-cell junction"/>
    <property type="evidence" value="ECO:0000266"/>
    <property type="project" value="RGD"/>
</dbReference>
<dbReference type="GO" id="GO:0005737">
    <property type="term" value="C:cytoplasm"/>
    <property type="evidence" value="ECO:0000314"/>
    <property type="project" value="UniProtKB"/>
</dbReference>
<dbReference type="GO" id="GO:0005768">
    <property type="term" value="C:endosome"/>
    <property type="evidence" value="ECO:0000314"/>
    <property type="project" value="RGD"/>
</dbReference>
<dbReference type="GO" id="GO:0005886">
    <property type="term" value="C:plasma membrane"/>
    <property type="evidence" value="ECO:0000314"/>
    <property type="project" value="UniProtKB"/>
</dbReference>
<dbReference type="GO" id="GO:0055056">
    <property type="term" value="F:D-glucose transmembrane transporter activity"/>
    <property type="evidence" value="ECO:0000314"/>
    <property type="project" value="UniProtKB"/>
</dbReference>
<dbReference type="GO" id="GO:0033300">
    <property type="term" value="F:dehydroascorbic acid transmembrane transporter activity"/>
    <property type="evidence" value="ECO:0000314"/>
    <property type="project" value="UniProtKB"/>
</dbReference>
<dbReference type="GO" id="GO:0005353">
    <property type="term" value="F:fructose transmembrane transporter activity"/>
    <property type="evidence" value="ECO:0000250"/>
    <property type="project" value="UniProtKB"/>
</dbReference>
<dbReference type="GO" id="GO:0005354">
    <property type="term" value="F:galactose transmembrane transporter activity"/>
    <property type="evidence" value="ECO:0000250"/>
    <property type="project" value="UniProtKB"/>
</dbReference>
<dbReference type="GO" id="GO:0005158">
    <property type="term" value="F:insulin receptor binding"/>
    <property type="evidence" value="ECO:0000353"/>
    <property type="project" value="RGD"/>
</dbReference>
<dbReference type="GO" id="GO:0009758">
    <property type="term" value="P:carbohydrate utilization"/>
    <property type="evidence" value="ECO:0000315"/>
    <property type="project" value="RGD"/>
</dbReference>
<dbReference type="GO" id="GO:0071398">
    <property type="term" value="P:cellular response to fatty acid"/>
    <property type="evidence" value="ECO:0000314"/>
    <property type="project" value="RGD"/>
</dbReference>
<dbReference type="GO" id="GO:0046323">
    <property type="term" value="P:D-glucose import"/>
    <property type="evidence" value="ECO:0000318"/>
    <property type="project" value="GO_Central"/>
</dbReference>
<dbReference type="GO" id="GO:1904659">
    <property type="term" value="P:D-glucose transmembrane transport"/>
    <property type="evidence" value="ECO:0000314"/>
    <property type="project" value="UniProtKB"/>
</dbReference>
<dbReference type="GO" id="GO:0070837">
    <property type="term" value="P:dehydroascorbic acid transport"/>
    <property type="evidence" value="ECO:0000314"/>
    <property type="project" value="UniProtKB"/>
</dbReference>
<dbReference type="GO" id="GO:0015755">
    <property type="term" value="P:fructose transmembrane transport"/>
    <property type="evidence" value="ECO:0000270"/>
    <property type="project" value="RGD"/>
</dbReference>
<dbReference type="GO" id="GO:0015757">
    <property type="term" value="P:galactose transmembrane transport"/>
    <property type="evidence" value="ECO:0000250"/>
    <property type="project" value="UniProtKB"/>
</dbReference>
<dbReference type="GO" id="GO:0035774">
    <property type="term" value="P:positive regulation of insulin secretion involved in cellular response to glucose stimulus"/>
    <property type="evidence" value="ECO:0000266"/>
    <property type="project" value="RGD"/>
</dbReference>
<dbReference type="GO" id="GO:0009749">
    <property type="term" value="P:response to glucose"/>
    <property type="evidence" value="ECO:0000270"/>
    <property type="project" value="RGD"/>
</dbReference>
<dbReference type="GO" id="GO:0043434">
    <property type="term" value="P:response to peptide hormone"/>
    <property type="evidence" value="ECO:0000270"/>
    <property type="project" value="RGD"/>
</dbReference>
<dbReference type="CDD" id="cd17431">
    <property type="entry name" value="MFS_GLUT_Class1"/>
    <property type="match status" value="1"/>
</dbReference>
<dbReference type="FunFam" id="1.20.1250.20:FF:000029">
    <property type="entry name" value="solute carrier family 2, facilitated glucose transporter member 4"/>
    <property type="match status" value="1"/>
</dbReference>
<dbReference type="Gene3D" id="1.20.1250.20">
    <property type="entry name" value="MFS general substrate transporter like domains"/>
    <property type="match status" value="1"/>
</dbReference>
<dbReference type="InterPro" id="IPR002440">
    <property type="entry name" value="Glc_transpt_2"/>
</dbReference>
<dbReference type="InterPro" id="IPR045263">
    <property type="entry name" value="GLUT"/>
</dbReference>
<dbReference type="InterPro" id="IPR020846">
    <property type="entry name" value="MFS_dom"/>
</dbReference>
<dbReference type="InterPro" id="IPR005828">
    <property type="entry name" value="MFS_sugar_transport-like"/>
</dbReference>
<dbReference type="InterPro" id="IPR036259">
    <property type="entry name" value="MFS_trans_sf"/>
</dbReference>
<dbReference type="InterPro" id="IPR003663">
    <property type="entry name" value="Sugar/inositol_transpt"/>
</dbReference>
<dbReference type="InterPro" id="IPR005829">
    <property type="entry name" value="Sugar_transporter_CS"/>
</dbReference>
<dbReference type="NCBIfam" id="TIGR00879">
    <property type="entry name" value="SP"/>
    <property type="match status" value="1"/>
</dbReference>
<dbReference type="PANTHER" id="PTHR23503">
    <property type="entry name" value="SOLUTE CARRIER FAMILY 2"/>
    <property type="match status" value="1"/>
</dbReference>
<dbReference type="PANTHER" id="PTHR23503:SF27">
    <property type="entry name" value="SOLUTE CARRIER FAMILY 2, FACILITATED GLUCOSE TRANSPORTER MEMBER 2"/>
    <property type="match status" value="1"/>
</dbReference>
<dbReference type="Pfam" id="PF00083">
    <property type="entry name" value="Sugar_tr"/>
    <property type="match status" value="1"/>
</dbReference>
<dbReference type="PRINTS" id="PR01191">
    <property type="entry name" value="GLUCTRSPORT2"/>
</dbReference>
<dbReference type="PRINTS" id="PR00171">
    <property type="entry name" value="SUGRTRNSPORT"/>
</dbReference>
<dbReference type="SUPFAM" id="SSF103473">
    <property type="entry name" value="MFS general substrate transporter"/>
    <property type="match status" value="1"/>
</dbReference>
<dbReference type="PROSITE" id="PS50850">
    <property type="entry name" value="MFS"/>
    <property type="match status" value="1"/>
</dbReference>
<dbReference type="PROSITE" id="PS00216">
    <property type="entry name" value="SUGAR_TRANSPORT_1"/>
    <property type="match status" value="1"/>
</dbReference>
<dbReference type="PROSITE" id="PS00217">
    <property type="entry name" value="SUGAR_TRANSPORT_2"/>
    <property type="match status" value="1"/>
</dbReference>
<comment type="function">
    <text evidence="1 5">Facilitative hexose transporter that mediates the transport of glucose, fructose and galactose (PubMed:3048704). Likely mediates the bidirectional transfer of glucose across the plasma membrane of hepatocytes and is responsible for uptake of glucose by the beta cells; may comprise part of the glucose-sensing mechanism of the beta cell (PubMed:3048704). May also participate with the Na(+)/glucose cotransporter in the transcellular transport of glucose in the small intestine and kidney (By similarity). Also able to mediate the transport of dehydroascorbate (By similarity).</text>
</comment>
<comment type="catalytic activity">
    <reaction evidence="5">
        <text>D-glucose(out) = D-glucose(in)</text>
        <dbReference type="Rhea" id="RHEA:60376"/>
        <dbReference type="ChEBI" id="CHEBI:4167"/>
    </reaction>
</comment>
<comment type="catalytic activity">
    <reaction evidence="1">
        <text>D-fructose(out) = D-fructose(in)</text>
        <dbReference type="Rhea" id="RHEA:60372"/>
        <dbReference type="ChEBI" id="CHEBI:37721"/>
    </reaction>
</comment>
<comment type="catalytic activity">
    <reaction evidence="1">
        <text>L-dehydroascorbate(out) = L-dehydroascorbate(in)</text>
        <dbReference type="Rhea" id="RHEA:60380"/>
        <dbReference type="ChEBI" id="CHEBI:58539"/>
    </reaction>
</comment>
<comment type="catalytic activity">
    <reaction evidence="1">
        <text>D-galactose(in) = D-galactose(out)</text>
        <dbReference type="Rhea" id="RHEA:34915"/>
        <dbReference type="ChEBI" id="CHEBI:4139"/>
    </reaction>
</comment>
<comment type="activity regulation">
    <text evidence="1">D-glucose and maltose competitively inhibit fructose transport. D-glucose, D-fructose and maltose inhibit deoxyglucose transport.</text>
</comment>
<comment type="subcellular location">
    <subcellularLocation>
        <location evidence="5">Cell membrane</location>
        <topology>Multi-pass membrane protein</topology>
    </subcellularLocation>
</comment>
<comment type="tissue specificity">
    <text evidence="5">Present in liver, intestine, kidney and beta-pancreatic islet cells.</text>
</comment>
<comment type="PTM">
    <text evidence="3">N-glycosylated; required for stability and retention at the cell surface of pancreatic beta cells.</text>
</comment>
<comment type="similarity">
    <text evidence="8">Belongs to the major facilitator superfamily. Sugar transporter (TC 2.A.1.1) family. Glucose transporter subfamily.</text>
</comment>
<protein>
    <recommendedName>
        <fullName evidence="8">Solute carrier family 2, facilitated glucose transporter member 2</fullName>
    </recommendedName>
    <alternativeName>
        <fullName evidence="6">Glucose transporter type 2, liver</fullName>
        <shortName evidence="7">GLUT-2</shortName>
    </alternativeName>
</protein>
<feature type="chain" id="PRO_0000050348" description="Solute carrier family 2, facilitated glucose transporter member 2">
    <location>
        <begin position="1"/>
        <end position="522"/>
    </location>
</feature>
<feature type="topological domain" description="Cytoplasmic" evidence="4">
    <location>
        <begin position="1"/>
        <end position="10"/>
    </location>
</feature>
<feature type="transmembrane region" description="Helical; Name=1" evidence="4">
    <location>
        <begin position="11"/>
        <end position="31"/>
    </location>
</feature>
<feature type="topological domain" description="Extracellular" evidence="4">
    <location>
        <begin position="32"/>
        <end position="96"/>
    </location>
</feature>
<feature type="transmembrane region" description="Helical; Name=2" evidence="4">
    <location>
        <begin position="97"/>
        <end position="117"/>
    </location>
</feature>
<feature type="topological domain" description="Cytoplasmic" evidence="4">
    <location>
        <begin position="118"/>
        <end position="125"/>
    </location>
</feature>
<feature type="transmembrane region" description="Helical; Name=3" evidence="4">
    <location>
        <begin position="126"/>
        <end position="146"/>
    </location>
</feature>
<feature type="topological domain" description="Extracellular" evidence="4">
    <location>
        <begin position="147"/>
        <end position="156"/>
    </location>
</feature>
<feature type="transmembrane region" description="Helical; Name=4" evidence="4">
    <location>
        <begin position="157"/>
        <end position="177"/>
    </location>
</feature>
<feature type="topological domain" description="Cytoplasmic" evidence="4">
    <location>
        <begin position="178"/>
        <end position="185"/>
    </location>
</feature>
<feature type="transmembrane region" description="Helical; Name=5" evidence="4">
    <location>
        <begin position="186"/>
        <end position="206"/>
    </location>
</feature>
<feature type="topological domain" description="Extracellular" evidence="4">
    <location>
        <begin position="207"/>
        <end position="215"/>
    </location>
</feature>
<feature type="transmembrane region" description="Helical; Name=6" evidence="4">
    <location>
        <begin position="216"/>
        <end position="236"/>
    </location>
</feature>
<feature type="topological domain" description="Cytoplasmic" evidence="4">
    <location>
        <begin position="237"/>
        <end position="301"/>
    </location>
</feature>
<feature type="transmembrane region" description="Helical; Name=7" evidence="4">
    <location>
        <begin position="302"/>
        <end position="322"/>
    </location>
</feature>
<feature type="topological domain" description="Extracellular" evidence="4">
    <location>
        <begin position="323"/>
        <end position="337"/>
    </location>
</feature>
<feature type="transmembrane region" description="Helical; Name=8" evidence="4">
    <location>
        <begin position="338"/>
        <end position="358"/>
    </location>
</feature>
<feature type="topological domain" description="Cytoplasmic" evidence="4">
    <location>
        <begin position="359"/>
        <end position="365"/>
    </location>
</feature>
<feature type="transmembrane region" description="Helical; Name=9" evidence="4">
    <location>
        <begin position="366"/>
        <end position="386"/>
    </location>
</feature>
<feature type="topological domain" description="Extracellular" evidence="4">
    <location>
        <begin position="387"/>
        <end position="401"/>
    </location>
</feature>
<feature type="transmembrane region" description="Helical; Name=10" evidence="4">
    <location>
        <begin position="402"/>
        <end position="422"/>
    </location>
</feature>
<feature type="topological domain" description="Cytoplasmic" evidence="4">
    <location>
        <begin position="423"/>
        <end position="431"/>
    </location>
</feature>
<feature type="transmembrane region" description="Helical; Name=11" evidence="4">
    <location>
        <begin position="432"/>
        <end position="452"/>
    </location>
</feature>
<feature type="topological domain" description="Extracellular" evidence="4">
    <location>
        <begin position="453"/>
        <end position="459"/>
    </location>
</feature>
<feature type="transmembrane region" description="Helical; Name=12" evidence="4">
    <location>
        <begin position="460"/>
        <end position="480"/>
    </location>
</feature>
<feature type="topological domain" description="Cytoplasmic" evidence="4">
    <location>
        <begin position="481"/>
        <end position="522"/>
    </location>
</feature>
<feature type="binding site" evidence="2">
    <location>
        <position position="191"/>
    </location>
    <ligand>
        <name>D-glucose</name>
        <dbReference type="ChEBI" id="CHEBI:4167"/>
    </ligand>
</feature>
<feature type="binding site" evidence="2">
    <location>
        <begin position="312"/>
        <end position="313"/>
    </location>
    <ligand>
        <name>D-glucose</name>
        <dbReference type="ChEBI" id="CHEBI:4167"/>
    </ligand>
</feature>
<feature type="binding site" evidence="2">
    <location>
        <position position="318"/>
    </location>
    <ligand>
        <name>D-glucose</name>
        <dbReference type="ChEBI" id="CHEBI:4167"/>
    </ligand>
</feature>
<feature type="binding site" evidence="2">
    <location>
        <position position="347"/>
    </location>
    <ligand>
        <name>D-glucose</name>
        <dbReference type="ChEBI" id="CHEBI:4167"/>
    </ligand>
</feature>
<feature type="binding site" evidence="2">
    <location>
        <position position="410"/>
    </location>
    <ligand>
        <name>D-glucose</name>
        <dbReference type="ChEBI" id="CHEBI:4167"/>
    </ligand>
</feature>
<feature type="binding site" evidence="2">
    <location>
        <position position="418"/>
    </location>
    <ligand>
        <name>D-glucose</name>
        <dbReference type="ChEBI" id="CHEBI:4167"/>
    </ligand>
</feature>
<feature type="modified residue" description="Phosphothreonine" evidence="1">
    <location>
        <position position="521"/>
    </location>
</feature>
<feature type="glycosylation site" description="N-linked (GlcNAc...) asparagine" evidence="4">
    <location>
        <position position="62"/>
    </location>
</feature>
<name>GTR2_RAT</name>
<reference key="1">
    <citation type="journal article" date="1988" name="Cell">
        <title>Cloning and functional expression in bacteria of a novel glucose transporter present in liver, intestine, kidney, and beta-pancreatic islet cells.</title>
        <authorList>
            <person name="Thorens B."/>
            <person name="Sarkar H.K."/>
            <person name="Kaback H.R."/>
            <person name="Lodish H.F."/>
        </authorList>
    </citation>
    <scope>NUCLEOTIDE SEQUENCE [MRNA]</scope>
    <scope>FUNCTION</scope>
    <scope>SUBCELLULAR LOCATION</scope>
    <scope>TISSUE SPECIFICITY</scope>
    <scope>TRANSPORTER ACTIVITY</scope>
</reference>
<reference key="2">
    <citation type="journal article" date="1995" name="Arch. Biochem. Biophys.">
        <title>Cloning and characterization of rat pancreatic beta-cell/liver type glucose transporter gene: a unique exon/intron organization.</title>
        <authorList>
            <person name="Ahn Y.H."/>
            <person name="Kim J.W."/>
            <person name="Han G.S."/>
            <person name="Lee B.G."/>
            <person name="Kim Y.S."/>
        </authorList>
    </citation>
    <scope>NUCLEOTIDE SEQUENCE OF 389-456</scope>
    <source>
        <strain>Holtzman</strain>
        <tissue>Liver</tissue>
    </source>
</reference>
<keyword id="KW-1003">Cell membrane</keyword>
<keyword id="KW-0325">Glycoprotein</keyword>
<keyword id="KW-0472">Membrane</keyword>
<keyword id="KW-0597">Phosphoprotein</keyword>
<keyword id="KW-1185">Reference proteome</keyword>
<keyword id="KW-0762">Sugar transport</keyword>
<keyword id="KW-0812">Transmembrane</keyword>
<keyword id="KW-1133">Transmembrane helix</keyword>
<keyword id="KW-0813">Transport</keyword>
<gene>
    <name evidence="9" type="primary">Slc2a2</name>
    <name evidence="7" type="synonym">Glut2</name>
</gene>